<comment type="function">
    <text evidence="1">Conjugation of reduced glutathione to a wide number of exogenous and endogenous hydrophobic electrophiles.</text>
</comment>
<comment type="catalytic activity">
    <reaction>
        <text>RX + glutathione = an S-substituted glutathione + a halide anion + H(+)</text>
        <dbReference type="Rhea" id="RHEA:16437"/>
        <dbReference type="ChEBI" id="CHEBI:15378"/>
        <dbReference type="ChEBI" id="CHEBI:16042"/>
        <dbReference type="ChEBI" id="CHEBI:17792"/>
        <dbReference type="ChEBI" id="CHEBI:57925"/>
        <dbReference type="ChEBI" id="CHEBI:90779"/>
        <dbReference type="EC" id="2.5.1.18"/>
    </reaction>
</comment>
<comment type="similarity">
    <text evidence="5">Belongs to the GST superfamily. Alpha family.</text>
</comment>
<dbReference type="EC" id="2.5.1.18"/>
<dbReference type="EMBL" id="AAFI02000055">
    <property type="protein sequence ID" value="EAL65665.1"/>
    <property type="molecule type" value="Genomic_DNA"/>
</dbReference>
<dbReference type="RefSeq" id="XP_639027.1">
    <property type="nucleotide sequence ID" value="XM_633935.1"/>
</dbReference>
<dbReference type="SMR" id="Q54QV7"/>
<dbReference type="FunCoup" id="Q54QV7">
    <property type="interactions" value="24"/>
</dbReference>
<dbReference type="STRING" id="44689.Q54QV7"/>
<dbReference type="PaxDb" id="44689-DDB0231408"/>
<dbReference type="EnsemblProtists" id="EAL65665">
    <property type="protein sequence ID" value="EAL65665"/>
    <property type="gene ID" value="DDB_G0283575"/>
</dbReference>
<dbReference type="GeneID" id="8624155"/>
<dbReference type="KEGG" id="ddi:DDB_G0283575"/>
<dbReference type="dictyBase" id="DDB_G0283575"/>
<dbReference type="VEuPathDB" id="AmoebaDB:DDB_G0283575"/>
<dbReference type="eggNOG" id="KOG1695">
    <property type="taxonomic scope" value="Eukaryota"/>
</dbReference>
<dbReference type="HOGENOM" id="CLU_039475_1_0_1"/>
<dbReference type="InParanoid" id="Q54QV7"/>
<dbReference type="OMA" id="DMIMILP"/>
<dbReference type="PhylomeDB" id="Q54QV7"/>
<dbReference type="Reactome" id="R-DDI-156590">
    <property type="pathway name" value="Glutathione conjugation"/>
</dbReference>
<dbReference type="Reactome" id="R-DDI-189483">
    <property type="pathway name" value="Heme degradation"/>
</dbReference>
<dbReference type="Reactome" id="R-DDI-3299685">
    <property type="pathway name" value="Detoxification of Reactive Oxygen Species"/>
</dbReference>
<dbReference type="Reactome" id="R-DDI-6798695">
    <property type="pathway name" value="Neutrophil degranulation"/>
</dbReference>
<dbReference type="Reactome" id="R-DDI-9748787">
    <property type="pathway name" value="Azathioprine ADME"/>
</dbReference>
<dbReference type="Reactome" id="R-DDI-9753281">
    <property type="pathway name" value="Paracetamol ADME"/>
</dbReference>
<dbReference type="PRO" id="PR:Q54QV7"/>
<dbReference type="Proteomes" id="UP000002195">
    <property type="component" value="Chromosome 4"/>
</dbReference>
<dbReference type="GO" id="GO:0004364">
    <property type="term" value="F:glutathione transferase activity"/>
    <property type="evidence" value="ECO:0000318"/>
    <property type="project" value="GO_Central"/>
</dbReference>
<dbReference type="GO" id="GO:0006749">
    <property type="term" value="P:glutathione metabolic process"/>
    <property type="evidence" value="ECO:0000318"/>
    <property type="project" value="GO_Central"/>
</dbReference>
<dbReference type="CDD" id="cd03192">
    <property type="entry name" value="GST_C_Sigma_like"/>
    <property type="match status" value="1"/>
</dbReference>
<dbReference type="CDD" id="cd03039">
    <property type="entry name" value="GST_N_Sigma_like"/>
    <property type="match status" value="1"/>
</dbReference>
<dbReference type="FunFam" id="1.20.1050.130:FF:000014">
    <property type="entry name" value="Putative glutathione S-transferase alpha-5"/>
    <property type="match status" value="1"/>
</dbReference>
<dbReference type="Gene3D" id="1.20.1050.130">
    <property type="match status" value="1"/>
</dbReference>
<dbReference type="InterPro" id="IPR010987">
    <property type="entry name" value="Glutathione-S-Trfase_C-like"/>
</dbReference>
<dbReference type="InterPro" id="IPR036282">
    <property type="entry name" value="Glutathione-S-Trfase_C_sf"/>
</dbReference>
<dbReference type="InterPro" id="IPR040079">
    <property type="entry name" value="Glutathione_S-Trfase"/>
</dbReference>
<dbReference type="InterPro" id="IPR004045">
    <property type="entry name" value="Glutathione_S-Trfase_N"/>
</dbReference>
<dbReference type="InterPro" id="IPR004046">
    <property type="entry name" value="GST_C"/>
</dbReference>
<dbReference type="InterPro" id="IPR050213">
    <property type="entry name" value="GST_superfamily"/>
</dbReference>
<dbReference type="InterPro" id="IPR036249">
    <property type="entry name" value="Thioredoxin-like_sf"/>
</dbReference>
<dbReference type="PANTHER" id="PTHR11571">
    <property type="entry name" value="GLUTATHIONE S-TRANSFERASE"/>
    <property type="match status" value="1"/>
</dbReference>
<dbReference type="PANTHER" id="PTHR11571:SF150">
    <property type="entry name" value="GLUTATHIONE S-TRANSFERASE"/>
    <property type="match status" value="1"/>
</dbReference>
<dbReference type="Pfam" id="PF14497">
    <property type="entry name" value="GST_C_3"/>
    <property type="match status" value="1"/>
</dbReference>
<dbReference type="Pfam" id="PF02798">
    <property type="entry name" value="GST_N"/>
    <property type="match status" value="1"/>
</dbReference>
<dbReference type="SFLD" id="SFLDG00363">
    <property type="entry name" value="AMPS_(cytGST):_Alpha-__Mu-__Pi"/>
    <property type="match status" value="1"/>
</dbReference>
<dbReference type="SFLD" id="SFLDS00019">
    <property type="entry name" value="Glutathione_Transferase_(cytos"/>
    <property type="match status" value="1"/>
</dbReference>
<dbReference type="SUPFAM" id="SSF47616">
    <property type="entry name" value="GST C-terminal domain-like"/>
    <property type="match status" value="1"/>
</dbReference>
<dbReference type="SUPFAM" id="SSF52833">
    <property type="entry name" value="Thioredoxin-like"/>
    <property type="match status" value="1"/>
</dbReference>
<dbReference type="PROSITE" id="PS50405">
    <property type="entry name" value="GST_CTER"/>
    <property type="match status" value="1"/>
</dbReference>
<dbReference type="PROSITE" id="PS50404">
    <property type="entry name" value="GST_NTER"/>
    <property type="match status" value="1"/>
</dbReference>
<gene>
    <name type="primary">gsta5</name>
    <name type="ORF">DDB_G0283575</name>
</gene>
<feature type="chain" id="PRO_0000350742" description="Putative glutathione S-transferase alpha-5">
    <location>
        <begin position="1"/>
        <end position="198"/>
    </location>
</feature>
<feature type="domain" description="GST N-terminal">
    <location>
        <begin position="2"/>
        <end position="78"/>
    </location>
</feature>
<feature type="domain" description="GST C-terminal">
    <location>
        <begin position="80"/>
        <end position="198"/>
    </location>
</feature>
<feature type="binding site" evidence="3">
    <location>
        <position position="8"/>
    </location>
    <ligand>
        <name>glutathione</name>
        <dbReference type="ChEBI" id="CHEBI:57925"/>
    </ligand>
</feature>
<feature type="binding site" evidence="2">
    <location>
        <position position="42"/>
    </location>
    <ligand>
        <name>glutathione</name>
        <dbReference type="ChEBI" id="CHEBI:57925"/>
    </ligand>
</feature>
<feature type="binding site" evidence="4">
    <location>
        <begin position="49"/>
        <end position="50"/>
    </location>
    <ligand>
        <name>glutathione</name>
        <dbReference type="ChEBI" id="CHEBI:57925"/>
    </ligand>
</feature>
<feature type="binding site" evidence="3">
    <location>
        <begin position="62"/>
        <end position="63"/>
    </location>
    <ligand>
        <name>glutathione</name>
        <dbReference type="ChEBI" id="CHEBI:57925"/>
    </ligand>
</feature>
<accession>Q54QV7</accession>
<sequence>MTKPTLTYFPVRGRVQFPRCLLEYLGEEYNFNEVKTISDDLRKQLLFKQLPLYQEGDFKIVQTPAIIDYISEKHDFRGKTKEERARAHQCLAGIMEVLDHCLGYSFKMDKQQQEKFRNESPIKKFFEGFEMVLSQNKYLASGEKETYVDLMAFVMVDYVTNLGLMPSGDYPKLISLKKHYESSPQLKKYLESRPQSNF</sequence>
<protein>
    <recommendedName>
        <fullName>Putative glutathione S-transferase alpha-5</fullName>
        <ecNumber>2.5.1.18</ecNumber>
    </recommendedName>
    <alternativeName>
        <fullName>GST class-alpha 5</fullName>
    </alternativeName>
</protein>
<proteinExistence type="inferred from homology"/>
<evidence type="ECO:0000250" key="1"/>
<evidence type="ECO:0000250" key="2">
    <source>
        <dbReference type="UniProtKB" id="P08263"/>
    </source>
</evidence>
<evidence type="ECO:0000250" key="3">
    <source>
        <dbReference type="UniProtKB" id="P13745"/>
    </source>
</evidence>
<evidence type="ECO:0000250" key="4">
    <source>
        <dbReference type="UniProtKB" id="P30711"/>
    </source>
</evidence>
<evidence type="ECO:0000305" key="5"/>
<organism>
    <name type="scientific">Dictyostelium discoideum</name>
    <name type="common">Social amoeba</name>
    <dbReference type="NCBI Taxonomy" id="44689"/>
    <lineage>
        <taxon>Eukaryota</taxon>
        <taxon>Amoebozoa</taxon>
        <taxon>Evosea</taxon>
        <taxon>Eumycetozoa</taxon>
        <taxon>Dictyostelia</taxon>
        <taxon>Dictyosteliales</taxon>
        <taxon>Dictyosteliaceae</taxon>
        <taxon>Dictyostelium</taxon>
    </lineage>
</organism>
<name>GSTA5_DICDI</name>
<keyword id="KW-1185">Reference proteome</keyword>
<keyword id="KW-0808">Transferase</keyword>
<reference key="1">
    <citation type="journal article" date="2005" name="Nature">
        <title>The genome of the social amoeba Dictyostelium discoideum.</title>
        <authorList>
            <person name="Eichinger L."/>
            <person name="Pachebat J.A."/>
            <person name="Gloeckner G."/>
            <person name="Rajandream M.A."/>
            <person name="Sucgang R."/>
            <person name="Berriman M."/>
            <person name="Song J."/>
            <person name="Olsen R."/>
            <person name="Szafranski K."/>
            <person name="Xu Q."/>
            <person name="Tunggal B."/>
            <person name="Kummerfeld S."/>
            <person name="Madera M."/>
            <person name="Konfortov B.A."/>
            <person name="Rivero F."/>
            <person name="Bankier A.T."/>
            <person name="Lehmann R."/>
            <person name="Hamlin N."/>
            <person name="Davies R."/>
            <person name="Gaudet P."/>
            <person name="Fey P."/>
            <person name="Pilcher K."/>
            <person name="Chen G."/>
            <person name="Saunders D."/>
            <person name="Sodergren E.J."/>
            <person name="Davis P."/>
            <person name="Kerhornou A."/>
            <person name="Nie X."/>
            <person name="Hall N."/>
            <person name="Anjard C."/>
            <person name="Hemphill L."/>
            <person name="Bason N."/>
            <person name="Farbrother P."/>
            <person name="Desany B."/>
            <person name="Just E."/>
            <person name="Morio T."/>
            <person name="Rost R."/>
            <person name="Churcher C.M."/>
            <person name="Cooper J."/>
            <person name="Haydock S."/>
            <person name="van Driessche N."/>
            <person name="Cronin A."/>
            <person name="Goodhead I."/>
            <person name="Muzny D.M."/>
            <person name="Mourier T."/>
            <person name="Pain A."/>
            <person name="Lu M."/>
            <person name="Harper D."/>
            <person name="Lindsay R."/>
            <person name="Hauser H."/>
            <person name="James K.D."/>
            <person name="Quiles M."/>
            <person name="Madan Babu M."/>
            <person name="Saito T."/>
            <person name="Buchrieser C."/>
            <person name="Wardroper A."/>
            <person name="Felder M."/>
            <person name="Thangavelu M."/>
            <person name="Johnson D."/>
            <person name="Knights A."/>
            <person name="Loulseged H."/>
            <person name="Mungall K.L."/>
            <person name="Oliver K."/>
            <person name="Price C."/>
            <person name="Quail M.A."/>
            <person name="Urushihara H."/>
            <person name="Hernandez J."/>
            <person name="Rabbinowitsch E."/>
            <person name="Steffen D."/>
            <person name="Sanders M."/>
            <person name="Ma J."/>
            <person name="Kohara Y."/>
            <person name="Sharp S."/>
            <person name="Simmonds M.N."/>
            <person name="Spiegler S."/>
            <person name="Tivey A."/>
            <person name="Sugano S."/>
            <person name="White B."/>
            <person name="Walker D."/>
            <person name="Woodward J.R."/>
            <person name="Winckler T."/>
            <person name="Tanaka Y."/>
            <person name="Shaulsky G."/>
            <person name="Schleicher M."/>
            <person name="Weinstock G.M."/>
            <person name="Rosenthal A."/>
            <person name="Cox E.C."/>
            <person name="Chisholm R.L."/>
            <person name="Gibbs R.A."/>
            <person name="Loomis W.F."/>
            <person name="Platzer M."/>
            <person name="Kay R.R."/>
            <person name="Williams J.G."/>
            <person name="Dear P.H."/>
            <person name="Noegel A.A."/>
            <person name="Barrell B.G."/>
            <person name="Kuspa A."/>
        </authorList>
    </citation>
    <scope>NUCLEOTIDE SEQUENCE [LARGE SCALE GENOMIC DNA]</scope>
    <source>
        <strain>AX4</strain>
    </source>
</reference>